<comment type="function">
    <text evidence="1">Condenses 4-methyl-5-(beta-hydroxyethyl)thiazole monophosphate (THZ-P) and 2-methyl-4-amino-5-hydroxymethyl pyrimidine pyrophosphate (HMP-PP) to form thiamine monophosphate (TMP).</text>
</comment>
<comment type="catalytic activity">
    <reaction evidence="1">
        <text>2-[(2R,5Z)-2-carboxy-4-methylthiazol-5(2H)-ylidene]ethyl phosphate + 4-amino-2-methyl-5-(diphosphooxymethyl)pyrimidine + 2 H(+) = thiamine phosphate + CO2 + diphosphate</text>
        <dbReference type="Rhea" id="RHEA:47844"/>
        <dbReference type="ChEBI" id="CHEBI:15378"/>
        <dbReference type="ChEBI" id="CHEBI:16526"/>
        <dbReference type="ChEBI" id="CHEBI:33019"/>
        <dbReference type="ChEBI" id="CHEBI:37575"/>
        <dbReference type="ChEBI" id="CHEBI:57841"/>
        <dbReference type="ChEBI" id="CHEBI:62899"/>
        <dbReference type="EC" id="2.5.1.3"/>
    </reaction>
</comment>
<comment type="catalytic activity">
    <reaction evidence="1">
        <text>2-(2-carboxy-4-methylthiazol-5-yl)ethyl phosphate + 4-amino-2-methyl-5-(diphosphooxymethyl)pyrimidine + 2 H(+) = thiamine phosphate + CO2 + diphosphate</text>
        <dbReference type="Rhea" id="RHEA:47848"/>
        <dbReference type="ChEBI" id="CHEBI:15378"/>
        <dbReference type="ChEBI" id="CHEBI:16526"/>
        <dbReference type="ChEBI" id="CHEBI:33019"/>
        <dbReference type="ChEBI" id="CHEBI:37575"/>
        <dbReference type="ChEBI" id="CHEBI:57841"/>
        <dbReference type="ChEBI" id="CHEBI:62890"/>
        <dbReference type="EC" id="2.5.1.3"/>
    </reaction>
</comment>
<comment type="catalytic activity">
    <reaction evidence="1">
        <text>4-methyl-5-(2-phosphooxyethyl)-thiazole + 4-amino-2-methyl-5-(diphosphooxymethyl)pyrimidine + H(+) = thiamine phosphate + diphosphate</text>
        <dbReference type="Rhea" id="RHEA:22328"/>
        <dbReference type="ChEBI" id="CHEBI:15378"/>
        <dbReference type="ChEBI" id="CHEBI:33019"/>
        <dbReference type="ChEBI" id="CHEBI:37575"/>
        <dbReference type="ChEBI" id="CHEBI:57841"/>
        <dbReference type="ChEBI" id="CHEBI:58296"/>
        <dbReference type="EC" id="2.5.1.3"/>
    </reaction>
</comment>
<comment type="cofactor">
    <cofactor evidence="1">
        <name>Mg(2+)</name>
        <dbReference type="ChEBI" id="CHEBI:18420"/>
    </cofactor>
    <text evidence="1">Binds 1 Mg(2+) ion per subunit.</text>
</comment>
<comment type="pathway">
    <text evidence="1">Cofactor biosynthesis; thiamine diphosphate biosynthesis; thiamine phosphate from 4-amino-2-methyl-5-diphosphomethylpyrimidine and 4-methyl-5-(2-phosphoethyl)-thiazole: step 1/1.</text>
</comment>
<comment type="similarity">
    <text evidence="1">Belongs to the thiamine-phosphate synthase family.</text>
</comment>
<protein>
    <recommendedName>
        <fullName evidence="1">Thiamine-phosphate synthase 1</fullName>
        <shortName evidence="1">TP synthase 1</shortName>
        <shortName evidence="1">TPS 1</shortName>
        <ecNumber evidence="1">2.5.1.3</ecNumber>
    </recommendedName>
    <alternativeName>
        <fullName evidence="1">Thiamine-phosphate pyrophosphorylase 1</fullName>
        <shortName evidence="1">TMP pyrophosphorylase 1</shortName>
        <shortName evidence="1">TMP-PPase 1</shortName>
    </alternativeName>
</protein>
<sequence length="209" mass="23276">MFHKELLKLYFICGTTTCQGKNLYTVVEEALKGGITLFQFREKGEGALEGLEKLELAIQIKELCKKYNVPFIVNDDIDLAMEIDADGVHVGQDDIGVDEIRKLMPDKIIGLSIRNEEEFQQSKVEYVDYVGVGPVFGTQSKDDAGGTIGYEGLELMRKLLPQMPLVAIGGIQTKHIKDIIKTNMDGVSIISAISYAKNIEKTVREMSEQ</sequence>
<proteinExistence type="inferred from homology"/>
<organism>
    <name type="scientific">Streptococcus pneumoniae serotype 4 (strain ATCC BAA-334 / TIGR4)</name>
    <dbReference type="NCBI Taxonomy" id="170187"/>
    <lineage>
        <taxon>Bacteria</taxon>
        <taxon>Bacillati</taxon>
        <taxon>Bacillota</taxon>
        <taxon>Bacilli</taxon>
        <taxon>Lactobacillales</taxon>
        <taxon>Streptococcaceae</taxon>
        <taxon>Streptococcus</taxon>
    </lineage>
</organism>
<accession>Q97RS5</accession>
<evidence type="ECO:0000255" key="1">
    <source>
        <dbReference type="HAMAP-Rule" id="MF_00097"/>
    </source>
</evidence>
<dbReference type="EC" id="2.5.1.3" evidence="1"/>
<dbReference type="EMBL" id="AE005672">
    <property type="protein sequence ID" value="AAK74859.1"/>
    <property type="molecule type" value="Genomic_DNA"/>
</dbReference>
<dbReference type="PIR" id="B95083">
    <property type="entry name" value="B95083"/>
</dbReference>
<dbReference type="SMR" id="Q97RS5"/>
<dbReference type="PaxDb" id="170187-SP_0718"/>
<dbReference type="EnsemblBacteria" id="AAK74859">
    <property type="protein sequence ID" value="AAK74859"/>
    <property type="gene ID" value="SP_0718"/>
</dbReference>
<dbReference type="KEGG" id="spn:SP_0718"/>
<dbReference type="eggNOG" id="COG0352">
    <property type="taxonomic scope" value="Bacteria"/>
</dbReference>
<dbReference type="PhylomeDB" id="Q97RS5"/>
<dbReference type="BioCyc" id="SPNE170187:G1FZB-736-MONOMER"/>
<dbReference type="UniPathway" id="UPA00060">
    <property type="reaction ID" value="UER00141"/>
</dbReference>
<dbReference type="Proteomes" id="UP000000585">
    <property type="component" value="Chromosome"/>
</dbReference>
<dbReference type="GO" id="GO:0005737">
    <property type="term" value="C:cytoplasm"/>
    <property type="evidence" value="ECO:0007669"/>
    <property type="project" value="TreeGrafter"/>
</dbReference>
<dbReference type="GO" id="GO:0000287">
    <property type="term" value="F:magnesium ion binding"/>
    <property type="evidence" value="ECO:0007669"/>
    <property type="project" value="UniProtKB-UniRule"/>
</dbReference>
<dbReference type="GO" id="GO:0004789">
    <property type="term" value="F:thiamine-phosphate diphosphorylase activity"/>
    <property type="evidence" value="ECO:0007669"/>
    <property type="project" value="UniProtKB-UniRule"/>
</dbReference>
<dbReference type="GO" id="GO:0009228">
    <property type="term" value="P:thiamine biosynthetic process"/>
    <property type="evidence" value="ECO:0007669"/>
    <property type="project" value="UniProtKB-KW"/>
</dbReference>
<dbReference type="GO" id="GO:0009229">
    <property type="term" value="P:thiamine diphosphate biosynthetic process"/>
    <property type="evidence" value="ECO:0007669"/>
    <property type="project" value="UniProtKB-UniRule"/>
</dbReference>
<dbReference type="CDD" id="cd00564">
    <property type="entry name" value="TMP_TenI"/>
    <property type="match status" value="1"/>
</dbReference>
<dbReference type="FunFam" id="3.20.20.70:FF:000096">
    <property type="entry name" value="Thiamine-phosphate synthase"/>
    <property type="match status" value="1"/>
</dbReference>
<dbReference type="Gene3D" id="3.20.20.70">
    <property type="entry name" value="Aldolase class I"/>
    <property type="match status" value="1"/>
</dbReference>
<dbReference type="HAMAP" id="MF_00097">
    <property type="entry name" value="TMP_synthase"/>
    <property type="match status" value="1"/>
</dbReference>
<dbReference type="InterPro" id="IPR013785">
    <property type="entry name" value="Aldolase_TIM"/>
</dbReference>
<dbReference type="InterPro" id="IPR036206">
    <property type="entry name" value="ThiamineP_synth_sf"/>
</dbReference>
<dbReference type="InterPro" id="IPR022998">
    <property type="entry name" value="ThiamineP_synth_TenI"/>
</dbReference>
<dbReference type="InterPro" id="IPR034291">
    <property type="entry name" value="TMP_synthase"/>
</dbReference>
<dbReference type="NCBIfam" id="TIGR00693">
    <property type="entry name" value="thiE"/>
    <property type="match status" value="1"/>
</dbReference>
<dbReference type="PANTHER" id="PTHR20857">
    <property type="entry name" value="THIAMINE-PHOSPHATE PYROPHOSPHORYLASE"/>
    <property type="match status" value="1"/>
</dbReference>
<dbReference type="PANTHER" id="PTHR20857:SF15">
    <property type="entry name" value="THIAMINE-PHOSPHATE SYNTHASE"/>
    <property type="match status" value="1"/>
</dbReference>
<dbReference type="Pfam" id="PF02581">
    <property type="entry name" value="TMP-TENI"/>
    <property type="match status" value="1"/>
</dbReference>
<dbReference type="SUPFAM" id="SSF51391">
    <property type="entry name" value="Thiamin phosphate synthase"/>
    <property type="match status" value="1"/>
</dbReference>
<feature type="chain" id="PRO_0000157055" description="Thiamine-phosphate synthase 1">
    <location>
        <begin position="1"/>
        <end position="209"/>
    </location>
</feature>
<feature type="binding site" evidence="1">
    <location>
        <begin position="39"/>
        <end position="43"/>
    </location>
    <ligand>
        <name>4-amino-2-methyl-5-(diphosphooxymethyl)pyrimidine</name>
        <dbReference type="ChEBI" id="CHEBI:57841"/>
    </ligand>
</feature>
<feature type="binding site" evidence="1">
    <location>
        <position position="74"/>
    </location>
    <ligand>
        <name>4-amino-2-methyl-5-(diphosphooxymethyl)pyrimidine</name>
        <dbReference type="ChEBI" id="CHEBI:57841"/>
    </ligand>
</feature>
<feature type="binding site" evidence="1">
    <location>
        <position position="75"/>
    </location>
    <ligand>
        <name>Mg(2+)</name>
        <dbReference type="ChEBI" id="CHEBI:18420"/>
    </ligand>
</feature>
<feature type="binding site" evidence="1">
    <location>
        <position position="94"/>
    </location>
    <ligand>
        <name>Mg(2+)</name>
        <dbReference type="ChEBI" id="CHEBI:18420"/>
    </ligand>
</feature>
<feature type="binding site" evidence="1">
    <location>
        <position position="112"/>
    </location>
    <ligand>
        <name>4-amino-2-methyl-5-(diphosphooxymethyl)pyrimidine</name>
        <dbReference type="ChEBI" id="CHEBI:57841"/>
    </ligand>
</feature>
<feature type="binding site" evidence="1">
    <location>
        <begin position="138"/>
        <end position="140"/>
    </location>
    <ligand>
        <name>2-[(2R,5Z)-2-carboxy-4-methylthiazol-5(2H)-ylidene]ethyl phosphate</name>
        <dbReference type="ChEBI" id="CHEBI:62899"/>
    </ligand>
</feature>
<feature type="binding site" evidence="1">
    <location>
        <position position="141"/>
    </location>
    <ligand>
        <name>4-amino-2-methyl-5-(diphosphooxymethyl)pyrimidine</name>
        <dbReference type="ChEBI" id="CHEBI:57841"/>
    </ligand>
</feature>
<feature type="binding site" evidence="1">
    <location>
        <position position="170"/>
    </location>
    <ligand>
        <name>2-[(2R,5Z)-2-carboxy-4-methylthiazol-5(2H)-ylidene]ethyl phosphate</name>
        <dbReference type="ChEBI" id="CHEBI:62899"/>
    </ligand>
</feature>
<feature type="binding site" evidence="1">
    <location>
        <begin position="190"/>
        <end position="191"/>
    </location>
    <ligand>
        <name>2-[(2R,5Z)-2-carboxy-4-methylthiazol-5(2H)-ylidene]ethyl phosphate</name>
        <dbReference type="ChEBI" id="CHEBI:62899"/>
    </ligand>
</feature>
<gene>
    <name evidence="1" type="primary">thiE1</name>
    <name type="ordered locus">SP_0718</name>
</gene>
<name>THIE1_STRPN</name>
<reference key="1">
    <citation type="journal article" date="2001" name="Science">
        <title>Complete genome sequence of a virulent isolate of Streptococcus pneumoniae.</title>
        <authorList>
            <person name="Tettelin H."/>
            <person name="Nelson K.E."/>
            <person name="Paulsen I.T."/>
            <person name="Eisen J.A."/>
            <person name="Read T.D."/>
            <person name="Peterson S.N."/>
            <person name="Heidelberg J.F."/>
            <person name="DeBoy R.T."/>
            <person name="Haft D.H."/>
            <person name="Dodson R.J."/>
            <person name="Durkin A.S."/>
            <person name="Gwinn M.L."/>
            <person name="Kolonay J.F."/>
            <person name="Nelson W.C."/>
            <person name="Peterson J.D."/>
            <person name="Umayam L.A."/>
            <person name="White O."/>
            <person name="Salzberg S.L."/>
            <person name="Lewis M.R."/>
            <person name="Radune D."/>
            <person name="Holtzapple E.K."/>
            <person name="Khouri H.M."/>
            <person name="Wolf A.M."/>
            <person name="Utterback T.R."/>
            <person name="Hansen C.L."/>
            <person name="McDonald L.A."/>
            <person name="Feldblyum T.V."/>
            <person name="Angiuoli S.V."/>
            <person name="Dickinson T."/>
            <person name="Hickey E.K."/>
            <person name="Holt I.E."/>
            <person name="Loftus B.J."/>
            <person name="Yang F."/>
            <person name="Smith H.O."/>
            <person name="Venter J.C."/>
            <person name="Dougherty B.A."/>
            <person name="Morrison D.A."/>
            <person name="Hollingshead S.K."/>
            <person name="Fraser C.M."/>
        </authorList>
    </citation>
    <scope>NUCLEOTIDE SEQUENCE [LARGE SCALE GENOMIC DNA]</scope>
    <source>
        <strain>ATCC BAA-334 / TIGR4</strain>
    </source>
</reference>
<keyword id="KW-0460">Magnesium</keyword>
<keyword id="KW-0479">Metal-binding</keyword>
<keyword id="KW-1185">Reference proteome</keyword>
<keyword id="KW-0784">Thiamine biosynthesis</keyword>
<keyword id="KW-0808">Transferase</keyword>